<proteinExistence type="predicted"/>
<keyword id="KW-1185">Reference proteome</keyword>
<keyword id="KW-0833">Ubl conjugation pathway</keyword>
<gene>
    <name type="primary">HUB1</name>
    <name type="ordered locus">AER266C</name>
</gene>
<name>HUB1_EREGS</name>
<protein>
    <recommendedName>
        <fullName>Ubiquitin-like modifier HUB1</fullName>
    </recommendedName>
</protein>
<dbReference type="EMBL" id="AE016818">
    <property type="protein sequence ID" value="AAS52947.1"/>
    <property type="molecule type" value="Genomic_DNA"/>
</dbReference>
<dbReference type="RefSeq" id="NP_985123.1">
    <property type="nucleotide sequence ID" value="NM_210477.1"/>
</dbReference>
<dbReference type="SMR" id="Q756X3"/>
<dbReference type="FunCoup" id="Q756X3">
    <property type="interactions" value="361"/>
</dbReference>
<dbReference type="STRING" id="284811.Q756X3"/>
<dbReference type="EnsemblFungi" id="AAS52947">
    <property type="protein sequence ID" value="AAS52947"/>
    <property type="gene ID" value="AGOS_AER266C"/>
</dbReference>
<dbReference type="GeneID" id="4621334"/>
<dbReference type="KEGG" id="ago:AGOS_AER266C"/>
<dbReference type="eggNOG" id="KOG3493">
    <property type="taxonomic scope" value="Eukaryota"/>
</dbReference>
<dbReference type="HOGENOM" id="CLU_156193_2_0_1"/>
<dbReference type="InParanoid" id="Q756X3"/>
<dbReference type="OMA" id="GMSLEMQ"/>
<dbReference type="OrthoDB" id="3881at2759"/>
<dbReference type="Proteomes" id="UP000000591">
    <property type="component" value="Chromosome V"/>
</dbReference>
<dbReference type="GO" id="GO:0005737">
    <property type="term" value="C:cytoplasm"/>
    <property type="evidence" value="ECO:0000318"/>
    <property type="project" value="GO_Central"/>
</dbReference>
<dbReference type="GO" id="GO:0005634">
    <property type="term" value="C:nucleus"/>
    <property type="evidence" value="ECO:0000318"/>
    <property type="project" value="GO_Central"/>
</dbReference>
<dbReference type="GO" id="GO:0031386">
    <property type="term" value="F:protein tag activity"/>
    <property type="evidence" value="ECO:0000318"/>
    <property type="project" value="GO_Central"/>
</dbReference>
<dbReference type="GO" id="GO:0045292">
    <property type="term" value="P:mRNA cis splicing, via spliceosome"/>
    <property type="evidence" value="ECO:0007669"/>
    <property type="project" value="EnsemblFungi"/>
</dbReference>
<dbReference type="GO" id="GO:0000398">
    <property type="term" value="P:mRNA splicing, via spliceosome"/>
    <property type="evidence" value="ECO:0000318"/>
    <property type="project" value="GO_Central"/>
</dbReference>
<dbReference type="GO" id="GO:0036211">
    <property type="term" value="P:protein modification process"/>
    <property type="evidence" value="ECO:0000318"/>
    <property type="project" value="GO_Central"/>
</dbReference>
<dbReference type="FunFam" id="3.10.20.90:FF:000052">
    <property type="entry name" value="Ubiquitin-like protein 5"/>
    <property type="match status" value="1"/>
</dbReference>
<dbReference type="Gene3D" id="3.10.20.90">
    <property type="entry name" value="Phosphatidylinositol 3-kinase Catalytic Subunit, Chain A, domain 1"/>
    <property type="match status" value="1"/>
</dbReference>
<dbReference type="InterPro" id="IPR039732">
    <property type="entry name" value="Hub1/Ubl5"/>
</dbReference>
<dbReference type="InterPro" id="IPR000626">
    <property type="entry name" value="Ubiquitin-like_dom"/>
</dbReference>
<dbReference type="InterPro" id="IPR029071">
    <property type="entry name" value="Ubiquitin-like_domsf"/>
</dbReference>
<dbReference type="PANTHER" id="PTHR13042">
    <property type="entry name" value="UBIQUITIN-LIKE PROTEIN 5"/>
    <property type="match status" value="1"/>
</dbReference>
<dbReference type="SUPFAM" id="SSF54236">
    <property type="entry name" value="Ubiquitin-like"/>
    <property type="match status" value="1"/>
</dbReference>
<dbReference type="PROSITE" id="PS50053">
    <property type="entry name" value="UBIQUITIN_2"/>
    <property type="match status" value="1"/>
</dbReference>
<organism>
    <name type="scientific">Eremothecium gossypii (strain ATCC 10895 / CBS 109.51 / FGSC 9923 / NRRL Y-1056)</name>
    <name type="common">Yeast</name>
    <name type="synonym">Ashbya gossypii</name>
    <dbReference type="NCBI Taxonomy" id="284811"/>
    <lineage>
        <taxon>Eukaryota</taxon>
        <taxon>Fungi</taxon>
        <taxon>Dikarya</taxon>
        <taxon>Ascomycota</taxon>
        <taxon>Saccharomycotina</taxon>
        <taxon>Saccharomycetes</taxon>
        <taxon>Saccharomycetales</taxon>
        <taxon>Saccharomycetaceae</taxon>
        <taxon>Eremothecium</taxon>
    </lineage>
</organism>
<evidence type="ECO:0000255" key="1">
    <source>
        <dbReference type="PROSITE-ProRule" id="PRU00214"/>
    </source>
</evidence>
<accession>Q756X3</accession>
<feature type="chain" id="PRO_0000114874" description="Ubiquitin-like modifier HUB1">
    <location>
        <begin position="1"/>
        <end position="73"/>
    </location>
</feature>
<feature type="domain" description="Ubiquitin-like" evidence="1">
    <location>
        <begin position="1"/>
        <end position="73"/>
    </location>
</feature>
<sequence>MIEVIVNDRLGKKLRVKCLSTDSVGDLKKVLAVQLGTAHGKVALHKGGVNLKDHISLDDYEVHDGTYLELYYL</sequence>
<reference key="1">
    <citation type="journal article" date="2004" name="Science">
        <title>The Ashbya gossypii genome as a tool for mapping the ancient Saccharomyces cerevisiae genome.</title>
        <authorList>
            <person name="Dietrich F.S."/>
            <person name="Voegeli S."/>
            <person name="Brachat S."/>
            <person name="Lerch A."/>
            <person name="Gates K."/>
            <person name="Steiner S."/>
            <person name="Mohr C."/>
            <person name="Poehlmann R."/>
            <person name="Luedi P."/>
            <person name="Choi S."/>
            <person name="Wing R.A."/>
            <person name="Flavier A."/>
            <person name="Gaffney T.D."/>
            <person name="Philippsen P."/>
        </authorList>
    </citation>
    <scope>NUCLEOTIDE SEQUENCE [LARGE SCALE GENOMIC DNA]</scope>
    <source>
        <strain>ATCC 10895 / CBS 109.51 / FGSC 9923 / NRRL Y-1056</strain>
    </source>
</reference>
<reference key="2">
    <citation type="journal article" date="2013" name="G3 (Bethesda)">
        <title>Genomes of Ashbya fungi isolated from insects reveal four mating-type loci, numerous translocations, lack of transposons, and distinct gene duplications.</title>
        <authorList>
            <person name="Dietrich F.S."/>
            <person name="Voegeli S."/>
            <person name="Kuo S."/>
            <person name="Philippsen P."/>
        </authorList>
    </citation>
    <scope>GENOME REANNOTATION</scope>
    <source>
        <strain>ATCC 10895 / CBS 109.51 / FGSC 9923 / NRRL Y-1056</strain>
    </source>
</reference>